<accession>Q45XH6</accession>
<sequence length="147" mass="16164">MVDFTAEEKAAITRLWGKMNVEEAGGKALGRLLIVYPWTQRFFDNFGNLSSASAIMGNPKVKAHGKKVLNSFGDAVKNPDNLKGTFAKLSELHCDKLLVDSENFRLLGNVLVIVLANHFGKEFTPQVQAAWQKMATGVASAVARKYH</sequence>
<organism>
    <name type="scientific">Trichechus manatus</name>
    <name type="common">Caribbean manatee</name>
    <name type="synonym">West Indian manatee</name>
    <dbReference type="NCBI Taxonomy" id="9778"/>
    <lineage>
        <taxon>Eukaryota</taxon>
        <taxon>Metazoa</taxon>
        <taxon>Chordata</taxon>
        <taxon>Craniata</taxon>
        <taxon>Vertebrata</taxon>
        <taxon>Euteleostomi</taxon>
        <taxon>Mammalia</taxon>
        <taxon>Eutheria</taxon>
        <taxon>Afrotheria</taxon>
        <taxon>Sirenia</taxon>
        <taxon>Trichechidae</taxon>
        <taxon>Trichechus</taxon>
    </lineage>
</organism>
<comment type="function">
    <text>Gamma chains make up the fetal hemoglobin F, in combination with alpha chains.</text>
</comment>
<comment type="subunit">
    <text>Heterotetramer of two alpha chains and two gamma chains in fetal hemoglobin (Hb F).</text>
</comment>
<comment type="tissue specificity">
    <text>Red blood cells.</text>
</comment>
<comment type="similarity">
    <text evidence="1">Belongs to the globin family.</text>
</comment>
<reference key="1">
    <citation type="submission" date="2005-06" db="EMBL/GenBank/DDBJ databases">
        <title>Atypical molecular evolution of afrotherian and xenarthran beta-globin cluster genes.</title>
        <authorList>
            <person name="Sloan A.M."/>
            <person name="Campbell K.L."/>
        </authorList>
    </citation>
    <scope>NUCLEOTIDE SEQUENCE [GENOMIC DNA]</scope>
</reference>
<evidence type="ECO:0000255" key="1">
    <source>
        <dbReference type="PROSITE-ProRule" id="PRU00238"/>
    </source>
</evidence>
<gene>
    <name type="primary">HBG</name>
</gene>
<protein>
    <recommendedName>
        <fullName>Hemoglobin subunit gamma</fullName>
    </recommendedName>
    <alternativeName>
        <fullName>Gamma-globin</fullName>
    </alternativeName>
    <alternativeName>
        <fullName>Hemoglobin gamma chain</fullName>
    </alternativeName>
</protein>
<dbReference type="EMBL" id="DQ091217">
    <property type="protein sequence ID" value="AAZ22688.1"/>
    <property type="molecule type" value="Genomic_DNA"/>
</dbReference>
<dbReference type="SMR" id="Q45XH6"/>
<dbReference type="GO" id="GO:0072562">
    <property type="term" value="C:blood microparticle"/>
    <property type="evidence" value="ECO:0007669"/>
    <property type="project" value="TreeGrafter"/>
</dbReference>
<dbReference type="GO" id="GO:0031838">
    <property type="term" value="C:haptoglobin-hemoglobin complex"/>
    <property type="evidence" value="ECO:0007669"/>
    <property type="project" value="TreeGrafter"/>
</dbReference>
<dbReference type="GO" id="GO:0005833">
    <property type="term" value="C:hemoglobin complex"/>
    <property type="evidence" value="ECO:0007669"/>
    <property type="project" value="InterPro"/>
</dbReference>
<dbReference type="GO" id="GO:0031720">
    <property type="term" value="F:haptoglobin binding"/>
    <property type="evidence" value="ECO:0007669"/>
    <property type="project" value="TreeGrafter"/>
</dbReference>
<dbReference type="GO" id="GO:0020037">
    <property type="term" value="F:heme binding"/>
    <property type="evidence" value="ECO:0007669"/>
    <property type="project" value="InterPro"/>
</dbReference>
<dbReference type="GO" id="GO:0046872">
    <property type="term" value="F:metal ion binding"/>
    <property type="evidence" value="ECO:0007669"/>
    <property type="project" value="UniProtKB-KW"/>
</dbReference>
<dbReference type="GO" id="GO:0043177">
    <property type="term" value="F:organic acid binding"/>
    <property type="evidence" value="ECO:0007669"/>
    <property type="project" value="TreeGrafter"/>
</dbReference>
<dbReference type="GO" id="GO:0019825">
    <property type="term" value="F:oxygen binding"/>
    <property type="evidence" value="ECO:0007669"/>
    <property type="project" value="InterPro"/>
</dbReference>
<dbReference type="GO" id="GO:0005344">
    <property type="term" value="F:oxygen carrier activity"/>
    <property type="evidence" value="ECO:0007669"/>
    <property type="project" value="UniProtKB-KW"/>
</dbReference>
<dbReference type="GO" id="GO:0004601">
    <property type="term" value="F:peroxidase activity"/>
    <property type="evidence" value="ECO:0007669"/>
    <property type="project" value="TreeGrafter"/>
</dbReference>
<dbReference type="GO" id="GO:0042744">
    <property type="term" value="P:hydrogen peroxide catabolic process"/>
    <property type="evidence" value="ECO:0007669"/>
    <property type="project" value="TreeGrafter"/>
</dbReference>
<dbReference type="CDD" id="cd08925">
    <property type="entry name" value="Hb-beta-like"/>
    <property type="match status" value="1"/>
</dbReference>
<dbReference type="FunFam" id="1.10.490.10:FF:000001">
    <property type="entry name" value="Hemoglobin subunit beta"/>
    <property type="match status" value="1"/>
</dbReference>
<dbReference type="Gene3D" id="1.10.490.10">
    <property type="entry name" value="Globins"/>
    <property type="match status" value="1"/>
</dbReference>
<dbReference type="InterPro" id="IPR000971">
    <property type="entry name" value="Globin"/>
</dbReference>
<dbReference type="InterPro" id="IPR009050">
    <property type="entry name" value="Globin-like_sf"/>
</dbReference>
<dbReference type="InterPro" id="IPR012292">
    <property type="entry name" value="Globin/Proto"/>
</dbReference>
<dbReference type="InterPro" id="IPR002337">
    <property type="entry name" value="Hemoglobin_b"/>
</dbReference>
<dbReference type="InterPro" id="IPR050056">
    <property type="entry name" value="Hemoglobin_oxygen_transport"/>
</dbReference>
<dbReference type="PANTHER" id="PTHR11442">
    <property type="entry name" value="HEMOGLOBIN FAMILY MEMBER"/>
    <property type="match status" value="1"/>
</dbReference>
<dbReference type="PANTHER" id="PTHR11442:SF7">
    <property type="entry name" value="HEMOGLOBIN SUBUNIT EPSILON"/>
    <property type="match status" value="1"/>
</dbReference>
<dbReference type="Pfam" id="PF00042">
    <property type="entry name" value="Globin"/>
    <property type="match status" value="1"/>
</dbReference>
<dbReference type="PRINTS" id="PR00814">
    <property type="entry name" value="BETAHAEM"/>
</dbReference>
<dbReference type="SUPFAM" id="SSF46458">
    <property type="entry name" value="Globin-like"/>
    <property type="match status" value="1"/>
</dbReference>
<dbReference type="PROSITE" id="PS01033">
    <property type="entry name" value="GLOBIN"/>
    <property type="match status" value="1"/>
</dbReference>
<keyword id="KW-0349">Heme</keyword>
<keyword id="KW-0408">Iron</keyword>
<keyword id="KW-0479">Metal-binding</keyword>
<keyword id="KW-0561">Oxygen transport</keyword>
<keyword id="KW-0813">Transport</keyword>
<name>HBG_TRIMA</name>
<proteinExistence type="evidence at transcript level"/>
<feature type="chain" id="PRO_0000053270" description="Hemoglobin subunit gamma">
    <location>
        <begin position="1"/>
        <end position="147"/>
    </location>
</feature>
<feature type="domain" description="Globin" evidence="1">
    <location>
        <begin position="3"/>
        <end position="147"/>
    </location>
</feature>
<feature type="binding site" description="distal binding residue" evidence="1">
    <location>
        <position position="64"/>
    </location>
    <ligand>
        <name>heme b</name>
        <dbReference type="ChEBI" id="CHEBI:60344"/>
    </ligand>
    <ligandPart>
        <name>Fe</name>
        <dbReference type="ChEBI" id="CHEBI:18248"/>
    </ligandPart>
</feature>
<feature type="binding site" description="proximal binding residue" evidence="1">
    <location>
        <position position="93"/>
    </location>
    <ligand>
        <name>heme b</name>
        <dbReference type="ChEBI" id="CHEBI:60344"/>
    </ligand>
    <ligandPart>
        <name>Fe</name>
        <dbReference type="ChEBI" id="CHEBI:18248"/>
    </ligandPart>
</feature>